<gene>
    <name evidence="1" type="primary">glk</name>
    <name type="ordered locus">NMCC_1305</name>
</gene>
<accession>A9M041</accession>
<sequence>MSSTPNKQAGYPRLVADIGGTNARFALETAPRVIEKAAVLPCKDYDTVTDAVRAYLNQSGATAVRHAAFAIANPILGDWVQMTNHHWAFSIETTRQTLGLDTLILLNDFTAQALAVTQTSSKDLMQVGGQKPVEFAPKAVIGPGTGLGVSGLVHSHAGWVALAGEGGHTSFPPFDDMEVLIWQYAKNKYGHVSAERFLSGAGLSLVYEALAAKQKAKPAKLMPSEITEKALSGASPLCRQTLDIFCAMLGTVASNLALTLGARGGVYLCGGIIPRVLEYFKTSPFRSRFENKGRFEAYLAAIPVYVVLSEFPGISGAAAALDNHLRNV</sequence>
<reference key="1">
    <citation type="journal article" date="2008" name="Genomics">
        <title>Characterization of ST-4821 complex, a unique Neisseria meningitidis clone.</title>
        <authorList>
            <person name="Peng J."/>
            <person name="Yang L."/>
            <person name="Yang F."/>
            <person name="Yang J."/>
            <person name="Yan Y."/>
            <person name="Nie H."/>
            <person name="Zhang X."/>
            <person name="Xiong Z."/>
            <person name="Jiang Y."/>
            <person name="Cheng F."/>
            <person name="Xu X."/>
            <person name="Chen S."/>
            <person name="Sun L."/>
            <person name="Li W."/>
            <person name="Shen Y."/>
            <person name="Shao Z."/>
            <person name="Liang X."/>
            <person name="Xu J."/>
            <person name="Jin Q."/>
        </authorList>
    </citation>
    <scope>NUCLEOTIDE SEQUENCE [LARGE SCALE GENOMIC DNA]</scope>
    <source>
        <strain>053442</strain>
    </source>
</reference>
<proteinExistence type="inferred from homology"/>
<name>GLK_NEIM0</name>
<comment type="catalytic activity">
    <reaction evidence="1">
        <text>D-glucose + ATP = D-glucose 6-phosphate + ADP + H(+)</text>
        <dbReference type="Rhea" id="RHEA:17825"/>
        <dbReference type="ChEBI" id="CHEBI:4167"/>
        <dbReference type="ChEBI" id="CHEBI:15378"/>
        <dbReference type="ChEBI" id="CHEBI:30616"/>
        <dbReference type="ChEBI" id="CHEBI:61548"/>
        <dbReference type="ChEBI" id="CHEBI:456216"/>
        <dbReference type="EC" id="2.7.1.2"/>
    </reaction>
</comment>
<comment type="subcellular location">
    <subcellularLocation>
        <location evidence="1">Cytoplasm</location>
    </subcellularLocation>
</comment>
<comment type="similarity">
    <text evidence="1">Belongs to the bacterial glucokinase family.</text>
</comment>
<evidence type="ECO:0000255" key="1">
    <source>
        <dbReference type="HAMAP-Rule" id="MF_00524"/>
    </source>
</evidence>
<organism>
    <name type="scientific">Neisseria meningitidis serogroup C (strain 053442)</name>
    <dbReference type="NCBI Taxonomy" id="374833"/>
    <lineage>
        <taxon>Bacteria</taxon>
        <taxon>Pseudomonadati</taxon>
        <taxon>Pseudomonadota</taxon>
        <taxon>Betaproteobacteria</taxon>
        <taxon>Neisseriales</taxon>
        <taxon>Neisseriaceae</taxon>
        <taxon>Neisseria</taxon>
    </lineage>
</organism>
<feature type="chain" id="PRO_1000081696" description="Glucokinase">
    <location>
        <begin position="1"/>
        <end position="328"/>
    </location>
</feature>
<feature type="binding site" evidence="1">
    <location>
        <begin position="16"/>
        <end position="21"/>
    </location>
    <ligand>
        <name>ATP</name>
        <dbReference type="ChEBI" id="CHEBI:30616"/>
    </ligand>
</feature>
<dbReference type="EC" id="2.7.1.2" evidence="1"/>
<dbReference type="EMBL" id="CP000381">
    <property type="protein sequence ID" value="ABX73477.1"/>
    <property type="molecule type" value="Genomic_DNA"/>
</dbReference>
<dbReference type="RefSeq" id="WP_002216974.1">
    <property type="nucleotide sequence ID" value="NC_010120.1"/>
</dbReference>
<dbReference type="SMR" id="A9M041"/>
<dbReference type="KEGG" id="nmn:NMCC_1305"/>
<dbReference type="HOGENOM" id="CLU_042582_1_0_4"/>
<dbReference type="Proteomes" id="UP000001177">
    <property type="component" value="Chromosome"/>
</dbReference>
<dbReference type="GO" id="GO:0005829">
    <property type="term" value="C:cytosol"/>
    <property type="evidence" value="ECO:0007669"/>
    <property type="project" value="TreeGrafter"/>
</dbReference>
<dbReference type="GO" id="GO:0005524">
    <property type="term" value="F:ATP binding"/>
    <property type="evidence" value="ECO:0007669"/>
    <property type="project" value="UniProtKB-UniRule"/>
</dbReference>
<dbReference type="GO" id="GO:0005536">
    <property type="term" value="F:D-glucose binding"/>
    <property type="evidence" value="ECO:0007669"/>
    <property type="project" value="InterPro"/>
</dbReference>
<dbReference type="GO" id="GO:0004340">
    <property type="term" value="F:glucokinase activity"/>
    <property type="evidence" value="ECO:0007669"/>
    <property type="project" value="UniProtKB-UniRule"/>
</dbReference>
<dbReference type="GO" id="GO:0006096">
    <property type="term" value="P:glycolytic process"/>
    <property type="evidence" value="ECO:0007669"/>
    <property type="project" value="UniProtKB-UniRule"/>
</dbReference>
<dbReference type="CDD" id="cd24008">
    <property type="entry name" value="ASKHA_NBD_GLK"/>
    <property type="match status" value="1"/>
</dbReference>
<dbReference type="FunFam" id="3.40.367.20:FF:000002">
    <property type="entry name" value="Glucokinase"/>
    <property type="match status" value="1"/>
</dbReference>
<dbReference type="Gene3D" id="3.30.420.40">
    <property type="match status" value="1"/>
</dbReference>
<dbReference type="Gene3D" id="3.40.367.20">
    <property type="match status" value="1"/>
</dbReference>
<dbReference type="HAMAP" id="MF_00524">
    <property type="entry name" value="Glucokinase"/>
    <property type="match status" value="1"/>
</dbReference>
<dbReference type="InterPro" id="IPR043129">
    <property type="entry name" value="ATPase_NBD"/>
</dbReference>
<dbReference type="InterPro" id="IPR050201">
    <property type="entry name" value="Bacterial_glucokinase"/>
</dbReference>
<dbReference type="InterPro" id="IPR003836">
    <property type="entry name" value="Glucokinase"/>
</dbReference>
<dbReference type="NCBIfam" id="TIGR00749">
    <property type="entry name" value="glk"/>
    <property type="match status" value="1"/>
</dbReference>
<dbReference type="NCBIfam" id="NF001416">
    <property type="entry name" value="PRK00292.1-3"/>
    <property type="match status" value="1"/>
</dbReference>
<dbReference type="PANTHER" id="PTHR47690">
    <property type="entry name" value="GLUCOKINASE"/>
    <property type="match status" value="1"/>
</dbReference>
<dbReference type="PANTHER" id="PTHR47690:SF1">
    <property type="entry name" value="GLUCOKINASE"/>
    <property type="match status" value="1"/>
</dbReference>
<dbReference type="Pfam" id="PF02685">
    <property type="entry name" value="Glucokinase"/>
    <property type="match status" value="1"/>
</dbReference>
<dbReference type="SUPFAM" id="SSF53067">
    <property type="entry name" value="Actin-like ATPase domain"/>
    <property type="match status" value="1"/>
</dbReference>
<keyword id="KW-0067">ATP-binding</keyword>
<keyword id="KW-0963">Cytoplasm</keyword>
<keyword id="KW-0324">Glycolysis</keyword>
<keyword id="KW-0418">Kinase</keyword>
<keyword id="KW-0547">Nucleotide-binding</keyword>
<keyword id="KW-0808">Transferase</keyword>
<protein>
    <recommendedName>
        <fullName evidence="1">Glucokinase</fullName>
        <ecNumber evidence="1">2.7.1.2</ecNumber>
    </recommendedName>
    <alternativeName>
        <fullName evidence="1">Glucose kinase</fullName>
    </alternativeName>
</protein>